<reference evidence="7" key="1">
    <citation type="journal article" date="2008" name="Biochem. J.">
        <title>Cyto-insectotoxins, a novel class of cytolytic and insecticidal peptides from spider venom.</title>
        <authorList>
            <person name="Vassilevski A.A."/>
            <person name="Kozlov S.A."/>
            <person name="Samsonova O.V."/>
            <person name="Egorova N.S."/>
            <person name="Karpunin D.V."/>
            <person name="Pluzhnikov K.A."/>
            <person name="Feofanov A.V."/>
            <person name="Grishin E.V."/>
        </authorList>
    </citation>
    <scope>NUCLEOTIDE SEQUENCE [MRNA]</scope>
    <scope>PROTEIN SEQUENCE OF 61-129</scope>
    <scope>SUBCELLULAR LOCATION</scope>
    <scope>TISSUE SPECIFICITY</scope>
    <source>
        <tissue evidence="3">Venom</tissue>
        <tissue>Venom gland</tissue>
    </source>
</reference>
<reference key="2">
    <citation type="journal article" date="2016" name="Biochem. J.">
        <title>Lachesana tarabaevi, an expert in membrane-active toxins.</title>
        <authorList>
            <person name="Kuzmenkov A.I."/>
            <person name="Sachkova M.Y."/>
            <person name="Kovalchuk S.I."/>
            <person name="Grishin E.V."/>
            <person name="Vassilevski A.A."/>
        </authorList>
    </citation>
    <scope>SUBCELLULAR LOCATION</scope>
    <scope>PQM MOTIF</scope>
    <scope>MASS SPECTROMETRY</scope>
    <source>
        <tissue evidence="6">Venom</tissue>
    </source>
</reference>
<comment type="function">
    <text evidence="1">Insecticidal, cytolytic and antimicrobial peptide. Forms voltage-dependent, ion-permeable channels in membranes. At high concentration causes cell membrane lysis (By similarity).</text>
</comment>
<comment type="subcellular location">
    <subcellularLocation>
        <location evidence="3 4">Secreted</location>
    </subcellularLocation>
</comment>
<comment type="tissue specificity">
    <text evidence="3">Expressed by the venom gland.</text>
</comment>
<comment type="domain">
    <text evidence="1">Both the N-terminus (61-94) and the C-terminus (99-129) of the mature peptide form alpha-helices which probably disrupt target cell membranes. The linker region (95-98) probably derives from a processing quadruplet motif (PQM), found in propeptides of many zodatoxins, hinting at a fusion of two originally separate membrane-active peptides.</text>
</comment>
<comment type="PTM">
    <text evidence="6">Cleavage of the propeptide depends on the processing quadruplet motif (XXXR, with at least one of X being E).</text>
</comment>
<comment type="mass spectrometry"/>
<comment type="similarity">
    <text evidence="7">Belongs to the cationic peptide 06 (cytoinsectotoxin) family.</text>
</comment>
<keyword id="KW-0044">Antibiotic</keyword>
<keyword id="KW-0929">Antimicrobial</keyword>
<keyword id="KW-0204">Cytolysis</keyword>
<keyword id="KW-0903">Direct protein sequencing</keyword>
<keyword id="KW-0354">Hemolysis</keyword>
<keyword id="KW-0964">Secreted</keyword>
<keyword id="KW-0732">Signal</keyword>
<keyword id="KW-0800">Toxin</keyword>
<organism>
    <name type="scientific">Lachesana tarabaevi</name>
    <name type="common">Spider</name>
    <dbReference type="NCBI Taxonomy" id="379576"/>
    <lineage>
        <taxon>Eukaryota</taxon>
        <taxon>Metazoa</taxon>
        <taxon>Ecdysozoa</taxon>
        <taxon>Arthropoda</taxon>
        <taxon>Chelicerata</taxon>
        <taxon>Arachnida</taxon>
        <taxon>Araneae</taxon>
        <taxon>Araneomorphae</taxon>
        <taxon>Entelegynae</taxon>
        <taxon>Entelegynae incertae sedis</taxon>
        <taxon>Zodariidae</taxon>
        <taxon>Lachesana</taxon>
    </lineage>
</organism>
<protein>
    <recommendedName>
        <fullName>M-zodatoxin-Lt8c</fullName>
        <shortName>M-ZDTX-Lt8c</shortName>
    </recommendedName>
    <alternativeName>
        <fullName evidence="5">Cytoinsectotoxin-1c</fullName>
        <shortName evidence="5">CIT-1c</shortName>
    </alternativeName>
</protein>
<feature type="signal peptide" evidence="2">
    <location>
        <begin position="1"/>
        <end position="20"/>
    </location>
</feature>
<feature type="propeptide" id="PRO_0000366076" evidence="3">
    <location>
        <begin position="21"/>
        <end position="60"/>
    </location>
</feature>
<feature type="chain" id="PRO_0000337160" description="M-zodatoxin-Lt8c">
    <location>
        <begin position="61"/>
        <end position="129"/>
    </location>
</feature>
<feature type="short sequence motif" description="Processing quadruplet motif" evidence="6">
    <location>
        <begin position="57"/>
        <end position="60"/>
    </location>
</feature>
<sequence>MKYFVVALALVAAFACIAESKPAESEHELAEVEEENELADLEDAVWLEHLADLSDLEEARGFFGNTWKKIKGKADKIMLKKAVKIMVKKEGISKEEAQAKVDAMSKKQIRLYVLKYYGKKALQKASEKL</sequence>
<proteinExistence type="evidence at protein level"/>
<name>CTX13_LACTA</name>
<gene>
    <name type="primary">cit 1-3</name>
</gene>
<evidence type="ECO:0000250" key="1">
    <source>
        <dbReference type="UniProtKB" id="P85253"/>
    </source>
</evidence>
<evidence type="ECO:0000255" key="2"/>
<evidence type="ECO:0000269" key="3">
    <source>
    </source>
</evidence>
<evidence type="ECO:0000269" key="4">
    <source>
    </source>
</evidence>
<evidence type="ECO:0000303" key="5">
    <source>
    </source>
</evidence>
<evidence type="ECO:0000303" key="6">
    <source>
    </source>
</evidence>
<evidence type="ECO:0000305" key="7"/>
<accession>P85255</accession>
<accession>B3W6I1</accession>
<dbReference type="EMBL" id="FM165476">
    <property type="protein sequence ID" value="CAQ63552.1"/>
    <property type="molecule type" value="mRNA"/>
</dbReference>
<dbReference type="SMR" id="P85255"/>
<dbReference type="ArachnoServer" id="AS000552">
    <property type="toxin name" value="M-zodatoxin-Lt8c"/>
</dbReference>
<dbReference type="GO" id="GO:0005576">
    <property type="term" value="C:extracellular region"/>
    <property type="evidence" value="ECO:0000250"/>
    <property type="project" value="UniProtKB"/>
</dbReference>
<dbReference type="GO" id="GO:0090729">
    <property type="term" value="F:toxin activity"/>
    <property type="evidence" value="ECO:0007669"/>
    <property type="project" value="UniProtKB-KW"/>
</dbReference>
<dbReference type="GO" id="GO:0050829">
    <property type="term" value="P:defense response to Gram-negative bacterium"/>
    <property type="evidence" value="ECO:0000250"/>
    <property type="project" value="UniProtKB"/>
</dbReference>
<dbReference type="GO" id="GO:0050830">
    <property type="term" value="P:defense response to Gram-positive bacterium"/>
    <property type="evidence" value="ECO:0000250"/>
    <property type="project" value="UniProtKB"/>
</dbReference>
<dbReference type="GO" id="GO:0031640">
    <property type="term" value="P:killing of cells of another organism"/>
    <property type="evidence" value="ECO:0007669"/>
    <property type="project" value="UniProtKB-KW"/>
</dbReference>
<dbReference type="InterPro" id="IPR018802">
    <property type="entry name" value="Latarcin_precursor"/>
</dbReference>
<dbReference type="Pfam" id="PF10279">
    <property type="entry name" value="Latarcin"/>
    <property type="match status" value="1"/>
</dbReference>